<accession>B4RCD6</accession>
<keyword id="KW-0133">Cell shape</keyword>
<keyword id="KW-0961">Cell wall biogenesis/degradation</keyword>
<keyword id="KW-0413">Isomerase</keyword>
<keyword id="KW-0573">Peptidoglycan synthesis</keyword>
<keyword id="KW-1185">Reference proteome</keyword>
<sequence>MAIGVFDSGVGGLTVHHRLVERFPDADFVYLADQANAPYGGRPGEEIVELTKAGCIRLFEAGCDLVVLACNTAASVALRRLQQTWLPGYRRETGRALNVLGIVVPTIEAATGLPWEHEAERRGEKVEKLDILGVFSTPATARSRVYEIEIDKRRQDVAVFSEPCPELARMIEAGAPREELKAVIEGHVQALRTRIGRAPDRAILGCTHYEIVADLFREALPPGTPLIRQPEATADALARYLDRHPEFDPGRSGLRRFLTTGEPGAQNSLVETFWGGPLSFEPA</sequence>
<gene>
    <name evidence="1" type="primary">murI</name>
    <name type="ordered locus">PHZ_c0121</name>
</gene>
<reference key="1">
    <citation type="journal article" date="2008" name="BMC Genomics">
        <title>Complete genome of Phenylobacterium zucineum - a novel facultative intracellular bacterium isolated from human erythroleukemia cell line K562.</title>
        <authorList>
            <person name="Luo Y."/>
            <person name="Xu X."/>
            <person name="Ding Z."/>
            <person name="Liu Z."/>
            <person name="Zhang B."/>
            <person name="Yan Z."/>
            <person name="Sun J."/>
            <person name="Hu S."/>
            <person name="Hu X."/>
        </authorList>
    </citation>
    <scope>NUCLEOTIDE SEQUENCE [LARGE SCALE GENOMIC DNA]</scope>
    <source>
        <strain>HLK1</strain>
    </source>
</reference>
<comment type="function">
    <text evidence="1">Provides the (R)-glutamate required for cell wall biosynthesis.</text>
</comment>
<comment type="catalytic activity">
    <reaction evidence="1">
        <text>L-glutamate = D-glutamate</text>
        <dbReference type="Rhea" id="RHEA:12813"/>
        <dbReference type="ChEBI" id="CHEBI:29985"/>
        <dbReference type="ChEBI" id="CHEBI:29986"/>
        <dbReference type="EC" id="5.1.1.3"/>
    </reaction>
</comment>
<comment type="pathway">
    <text evidence="1">Cell wall biogenesis; peptidoglycan biosynthesis.</text>
</comment>
<comment type="similarity">
    <text evidence="1">Belongs to the aspartate/glutamate racemases family.</text>
</comment>
<name>MURI_PHEZH</name>
<organism>
    <name type="scientific">Phenylobacterium zucineum (strain HLK1)</name>
    <dbReference type="NCBI Taxonomy" id="450851"/>
    <lineage>
        <taxon>Bacteria</taxon>
        <taxon>Pseudomonadati</taxon>
        <taxon>Pseudomonadota</taxon>
        <taxon>Alphaproteobacteria</taxon>
        <taxon>Caulobacterales</taxon>
        <taxon>Caulobacteraceae</taxon>
        <taxon>Phenylobacterium</taxon>
    </lineage>
</organism>
<proteinExistence type="inferred from homology"/>
<protein>
    <recommendedName>
        <fullName evidence="1">Glutamate racemase</fullName>
        <ecNumber evidence="1">5.1.1.3</ecNumber>
    </recommendedName>
</protein>
<feature type="chain" id="PRO_1000114056" description="Glutamate racemase">
    <location>
        <begin position="1"/>
        <end position="283"/>
    </location>
</feature>
<feature type="active site" description="Proton donor/acceptor" evidence="1">
    <location>
        <position position="70"/>
    </location>
</feature>
<feature type="active site" description="Proton donor/acceptor" evidence="1">
    <location>
        <position position="206"/>
    </location>
</feature>
<feature type="binding site" evidence="1">
    <location>
        <begin position="7"/>
        <end position="8"/>
    </location>
    <ligand>
        <name>substrate</name>
    </ligand>
</feature>
<feature type="binding site" evidence="1">
    <location>
        <begin position="39"/>
        <end position="40"/>
    </location>
    <ligand>
        <name>substrate</name>
    </ligand>
</feature>
<feature type="binding site" evidence="1">
    <location>
        <begin position="71"/>
        <end position="72"/>
    </location>
    <ligand>
        <name>substrate</name>
    </ligand>
</feature>
<feature type="binding site" evidence="1">
    <location>
        <begin position="207"/>
        <end position="208"/>
    </location>
    <ligand>
        <name>substrate</name>
    </ligand>
</feature>
<evidence type="ECO:0000255" key="1">
    <source>
        <dbReference type="HAMAP-Rule" id="MF_00258"/>
    </source>
</evidence>
<dbReference type="EC" id="5.1.1.3" evidence="1"/>
<dbReference type="EMBL" id="CP000747">
    <property type="protein sequence ID" value="ACG76535.1"/>
    <property type="molecule type" value="Genomic_DNA"/>
</dbReference>
<dbReference type="RefSeq" id="WP_012520683.1">
    <property type="nucleotide sequence ID" value="NC_011144.1"/>
</dbReference>
<dbReference type="SMR" id="B4RCD6"/>
<dbReference type="STRING" id="450851.PHZ_c0121"/>
<dbReference type="KEGG" id="pzu:PHZ_c0121"/>
<dbReference type="eggNOG" id="COG0796">
    <property type="taxonomic scope" value="Bacteria"/>
</dbReference>
<dbReference type="HOGENOM" id="CLU_052344_0_3_5"/>
<dbReference type="OrthoDB" id="9801055at2"/>
<dbReference type="UniPathway" id="UPA00219"/>
<dbReference type="Proteomes" id="UP000001868">
    <property type="component" value="Chromosome"/>
</dbReference>
<dbReference type="GO" id="GO:0008881">
    <property type="term" value="F:glutamate racemase activity"/>
    <property type="evidence" value="ECO:0007669"/>
    <property type="project" value="UniProtKB-UniRule"/>
</dbReference>
<dbReference type="GO" id="GO:0071555">
    <property type="term" value="P:cell wall organization"/>
    <property type="evidence" value="ECO:0007669"/>
    <property type="project" value="UniProtKB-KW"/>
</dbReference>
<dbReference type="GO" id="GO:0009252">
    <property type="term" value="P:peptidoglycan biosynthetic process"/>
    <property type="evidence" value="ECO:0007669"/>
    <property type="project" value="UniProtKB-UniRule"/>
</dbReference>
<dbReference type="GO" id="GO:0008360">
    <property type="term" value="P:regulation of cell shape"/>
    <property type="evidence" value="ECO:0007669"/>
    <property type="project" value="UniProtKB-KW"/>
</dbReference>
<dbReference type="Gene3D" id="3.40.50.1860">
    <property type="match status" value="2"/>
</dbReference>
<dbReference type="HAMAP" id="MF_00258">
    <property type="entry name" value="Glu_racemase"/>
    <property type="match status" value="1"/>
</dbReference>
<dbReference type="InterPro" id="IPR015942">
    <property type="entry name" value="Asp/Glu/hydantoin_racemase"/>
</dbReference>
<dbReference type="InterPro" id="IPR001920">
    <property type="entry name" value="Asp/Glu_race"/>
</dbReference>
<dbReference type="InterPro" id="IPR004391">
    <property type="entry name" value="Glu_race"/>
</dbReference>
<dbReference type="PANTHER" id="PTHR21198">
    <property type="entry name" value="GLUTAMATE RACEMASE"/>
    <property type="match status" value="1"/>
</dbReference>
<dbReference type="PANTHER" id="PTHR21198:SF2">
    <property type="entry name" value="GLUTAMATE RACEMASE"/>
    <property type="match status" value="1"/>
</dbReference>
<dbReference type="Pfam" id="PF01177">
    <property type="entry name" value="Asp_Glu_race"/>
    <property type="match status" value="1"/>
</dbReference>
<dbReference type="SUPFAM" id="SSF53681">
    <property type="entry name" value="Aspartate/glutamate racemase"/>
    <property type="match status" value="2"/>
</dbReference>